<feature type="chain" id="PRO_0000282953" description="Chloride channel protein 2">
    <location>
        <begin position="1"/>
        <end position="1193"/>
    </location>
</feature>
<feature type="topological domain" description="Cytoplasmic" evidence="1">
    <location>
        <begin position="1"/>
        <end position="168"/>
    </location>
</feature>
<feature type="transmembrane region" description="Helical" evidence="1">
    <location>
        <begin position="169"/>
        <end position="204"/>
    </location>
</feature>
<feature type="transmembrane region" description="Helical" evidence="1">
    <location>
        <begin position="213"/>
        <end position="236"/>
    </location>
</feature>
<feature type="intramembrane region" description="Helical" evidence="1">
    <location>
        <begin position="245"/>
        <end position="252"/>
    </location>
</feature>
<feature type="transmembrane region" description="Helical" evidence="1">
    <location>
        <begin position="261"/>
        <end position="279"/>
    </location>
</feature>
<feature type="transmembrane region" description="Helical" evidence="1">
    <location>
        <begin position="286"/>
        <end position="304"/>
    </location>
</feature>
<feature type="intramembrane region" description="Helical" evidence="1">
    <location>
        <begin position="320"/>
        <end position="332"/>
    </location>
</feature>
<feature type="intramembrane region" description="Helical" evidence="1">
    <location>
        <begin position="336"/>
        <end position="344"/>
    </location>
</feature>
<feature type="transmembrane region" description="Helical" evidence="1">
    <location>
        <begin position="356"/>
        <end position="373"/>
    </location>
</feature>
<feature type="transmembrane region" description="Helical" evidence="1">
    <location>
        <begin position="402"/>
        <end position="430"/>
    </location>
</feature>
<feature type="transmembrane region" description="Helical" evidence="1">
    <location>
        <begin position="439"/>
        <end position="458"/>
    </location>
</feature>
<feature type="transmembrane region" description="Helical" evidence="1">
    <location>
        <begin position="511"/>
        <end position="530"/>
    </location>
</feature>
<feature type="transmembrane region" description="Helical" evidence="1">
    <location>
        <begin position="536"/>
        <end position="555"/>
    </location>
</feature>
<feature type="intramembrane region" description="Helical" evidence="1">
    <location>
        <begin position="576"/>
        <end position="590"/>
    </location>
</feature>
<feature type="intramembrane region" description="Note=Loop between two helices" evidence="1">
    <location>
        <begin position="591"/>
        <end position="592"/>
    </location>
</feature>
<feature type="intramembrane region" description="Helical" evidence="1">
    <location>
        <begin position="593"/>
        <end position="604"/>
    </location>
</feature>
<feature type="intramembrane region" description="Note=Loop between two helices" evidence="1">
    <location>
        <begin position="605"/>
        <end position="609"/>
    </location>
</feature>
<feature type="transmembrane region" description="Helical" evidence="1">
    <location>
        <begin position="610"/>
        <end position="626"/>
    </location>
</feature>
<feature type="topological domain" description="Cytoplasmic" evidence="1">
    <location>
        <begin position="627"/>
        <end position="1193"/>
    </location>
</feature>
<feature type="domain" description="CBS 1" evidence="3">
    <location>
        <begin position="663"/>
        <end position="723"/>
    </location>
</feature>
<feature type="domain" description="CBS 2" evidence="3">
    <location>
        <begin position="1048"/>
        <end position="1105"/>
    </location>
</feature>
<feature type="region of interest" description="Disordered" evidence="4">
    <location>
        <begin position="76"/>
        <end position="97"/>
    </location>
</feature>
<feature type="region of interest" description="Disordered" evidence="4">
    <location>
        <begin position="848"/>
        <end position="884"/>
    </location>
</feature>
<feature type="region of interest" description="Disordered" evidence="4">
    <location>
        <begin position="1103"/>
        <end position="1122"/>
    </location>
</feature>
<feature type="region of interest" description="Disordered" evidence="4">
    <location>
        <begin position="1159"/>
        <end position="1193"/>
    </location>
</feature>
<feature type="short sequence motif" description="Selectivity filter part_1" evidence="1">
    <location>
        <begin position="242"/>
        <end position="246"/>
    </location>
</feature>
<feature type="short sequence motif" description="Selectivity filter part_2" evidence="1">
    <location>
        <begin position="284"/>
        <end position="288"/>
    </location>
</feature>
<feature type="short sequence motif" description="Selectivity filter part_3" evidence="1">
    <location>
        <begin position="536"/>
        <end position="540"/>
    </location>
</feature>
<feature type="compositionally biased region" description="Polar residues" evidence="4">
    <location>
        <begin position="1165"/>
        <end position="1193"/>
    </location>
</feature>
<feature type="binding site" evidence="1">
    <location>
        <position position="243"/>
    </location>
    <ligand>
        <name>chloride</name>
        <dbReference type="ChEBI" id="CHEBI:17996"/>
    </ligand>
</feature>
<feature type="binding site" evidence="1">
    <location>
        <position position="538"/>
    </location>
    <ligand>
        <name>chloride</name>
        <dbReference type="ChEBI" id="CHEBI:17996"/>
    </ligand>
</feature>
<feature type="binding site" evidence="1">
    <location>
        <position position="632"/>
    </location>
    <ligand>
        <name>chloride</name>
        <dbReference type="ChEBI" id="CHEBI:17996"/>
    </ligand>
</feature>
<feature type="splice variant" id="VSP_035041" description="In isoform G and isoform H." evidence="12">
    <original>M</original>
    <variation>MKATRNGGQLLIAPSPQTAARLLPLRTYSNASSLGHHHDRSTLSDGDEEEGGLGYTH</variation>
    <location>
        <position position="1"/>
    </location>
</feature>
<feature type="splice variant" id="VSP_052366" description="In isoform A and isoform C." evidence="10 11">
    <original>VYFGDRQRDRNRDRSNQKVERIIHDEEFGEENVELVDSEWADFEKFICQLRKRRNSAMSMEEELRHVQRHPKIKSHAFYPCPPPAENARDSDSSDDDDPIGYIDTL</original>
    <variation>FNNSHSHQDEYIREYAFEPELLINREDYQRKEERSQKSTAASSASTPVRQRWDEVIAKQKEQQRKQSIEIDPPGDDKNQIEIEIEAFYY</variation>
    <location>
        <begin position="2"/>
        <end position="107"/>
    </location>
</feature>
<feature type="splice variant" id="VSP_035042" description="In isoform G and isoform H." evidence="12">
    <location>
        <begin position="2"/>
        <end position="105"/>
    </location>
</feature>
<feature type="splice variant" id="VSP_052367" description="In isoform F, isoform C and isoform G." evidence="12">
    <location>
        <begin position="889"/>
        <end position="1015"/>
    </location>
</feature>
<feature type="sequence variant" description="In RNA edited version." evidence="8">
    <original>K</original>
    <variation>R</variation>
    <location>
        <position position="249"/>
    </location>
</feature>
<feature type="sequence variant" description="In RNA edited version." evidence="8">
    <original>T</original>
    <variation>A</variation>
    <location>
        <position position="276"/>
    </location>
</feature>
<feature type="sequence variant" description="In RNA edited version." evidence="8">
    <original>K</original>
    <variation>R</variation>
    <location>
        <position position="285"/>
    </location>
</feature>
<feature type="sequence variant" description="In RNA edited version." evidence="8">
    <original>E</original>
    <variation>G</variation>
    <location>
        <position position="286"/>
    </location>
</feature>
<feature type="sequence conflict" description="In Ref. 4; AAQ22442." evidence="13" ref="4">
    <original>S</original>
    <variation>P</variation>
    <location>
        <position position="529"/>
    </location>
</feature>
<evidence type="ECO:0000250" key="1"/>
<evidence type="ECO:0000255" key="2"/>
<evidence type="ECO:0000255" key="3">
    <source>
        <dbReference type="PROSITE-ProRule" id="PRU00703"/>
    </source>
</evidence>
<evidence type="ECO:0000256" key="4">
    <source>
        <dbReference type="SAM" id="MobiDB-lite"/>
    </source>
</evidence>
<evidence type="ECO:0000269" key="5">
    <source>
    </source>
</evidence>
<evidence type="ECO:0000269" key="6">
    <source>
    </source>
</evidence>
<evidence type="ECO:0000269" key="7">
    <source>
    </source>
</evidence>
<evidence type="ECO:0000269" key="8">
    <source>
    </source>
</evidence>
<evidence type="ECO:0000269" key="9">
    <source>
    </source>
</evidence>
<evidence type="ECO:0000303" key="10">
    <source>
    </source>
</evidence>
<evidence type="ECO:0000303" key="11">
    <source>
    </source>
</evidence>
<evidence type="ECO:0000303" key="12">
    <source ref="4"/>
</evidence>
<evidence type="ECO:0000305" key="13"/>
<evidence type="ECO:0000312" key="14">
    <source>
        <dbReference type="EMBL" id="AAF54702.3"/>
    </source>
</evidence>
<evidence type="ECO:0000312" key="15">
    <source>
        <dbReference type="EMBL" id="AAM50193.1"/>
    </source>
</evidence>
<evidence type="ECO:0000312" key="16">
    <source>
        <dbReference type="EMBL" id="AAQ22442.1"/>
    </source>
</evidence>
<dbReference type="EMBL" id="AE014297">
    <property type="protein sequence ID" value="AAF54701.3"/>
    <property type="molecule type" value="Genomic_DNA"/>
</dbReference>
<dbReference type="EMBL" id="AE014297">
    <property type="protein sequence ID" value="AAF54702.3"/>
    <property type="molecule type" value="Genomic_DNA"/>
</dbReference>
<dbReference type="EMBL" id="AE014297">
    <property type="protein sequence ID" value="AAN13532.2"/>
    <property type="molecule type" value="Genomic_DNA"/>
</dbReference>
<dbReference type="EMBL" id="AE014297">
    <property type="protein sequence ID" value="ABW08644.2"/>
    <property type="molecule type" value="Genomic_DNA"/>
</dbReference>
<dbReference type="EMBL" id="AE014297">
    <property type="protein sequence ID" value="ABW08645.1"/>
    <property type="molecule type" value="Genomic_DNA"/>
</dbReference>
<dbReference type="EMBL" id="AE014297">
    <property type="protein sequence ID" value="ACZ94889.1"/>
    <property type="molecule type" value="Genomic_DNA"/>
</dbReference>
<dbReference type="EMBL" id="AY119539">
    <property type="protein sequence ID" value="AAM50193.1"/>
    <property type="molecule type" value="mRNA"/>
</dbReference>
<dbReference type="EMBL" id="BT009973">
    <property type="protein sequence ID" value="AAQ22442.1"/>
    <property type="molecule type" value="mRNA"/>
</dbReference>
<dbReference type="EMBL" id="BT030454">
    <property type="protein sequence ID" value="ABP87896.1"/>
    <property type="molecule type" value="mRNA"/>
</dbReference>
<dbReference type="RefSeq" id="NP_001097751.2">
    <molecule id="Q9VGH7-6"/>
    <property type="nucleotide sequence ID" value="NM_001104281.2"/>
</dbReference>
<dbReference type="RefSeq" id="NP_001097752.1">
    <molecule id="Q9VGH7-3"/>
    <property type="nucleotide sequence ID" value="NM_001104282.3"/>
</dbReference>
<dbReference type="RefSeq" id="NP_001163592.1">
    <molecule id="Q9VGH7-7"/>
    <property type="nucleotide sequence ID" value="NM_001170121.1"/>
</dbReference>
<dbReference type="RefSeq" id="NP_731634.2">
    <molecule id="Q9VGH7-4"/>
    <property type="nucleotide sequence ID" value="NM_169431.3"/>
</dbReference>
<dbReference type="RefSeq" id="NP_731635.2">
    <molecule id="Q9VGH7-2"/>
    <property type="nucleotide sequence ID" value="NM_169432.3"/>
</dbReference>
<dbReference type="RefSeq" id="NP_788639.1">
    <molecule id="Q9VGH7-1"/>
    <property type="nucleotide sequence ID" value="NM_176462.2"/>
</dbReference>
<dbReference type="SMR" id="Q9VGH7"/>
<dbReference type="BioGRID" id="66550">
    <property type="interactions" value="4"/>
</dbReference>
<dbReference type="FunCoup" id="Q9VGH7">
    <property type="interactions" value="22"/>
</dbReference>
<dbReference type="IntAct" id="Q9VGH7">
    <property type="interactions" value="6"/>
</dbReference>
<dbReference type="STRING" id="7227.FBpp0082002"/>
<dbReference type="GlyGen" id="Q9VGH7">
    <property type="glycosylation" value="1 site"/>
</dbReference>
<dbReference type="PaxDb" id="7227-FBpp0082002"/>
<dbReference type="DNASU" id="41428"/>
<dbReference type="EnsemblMetazoa" id="FBtr0082526">
    <molecule id="Q9VGH7-2"/>
    <property type="protein sequence ID" value="FBpp0082000"/>
    <property type="gene ID" value="FBgn0051116"/>
</dbReference>
<dbReference type="EnsemblMetazoa" id="FBtr0082527">
    <molecule id="Q9VGH7-4"/>
    <property type="protein sequence ID" value="FBpp0082001"/>
    <property type="gene ID" value="FBgn0051116"/>
</dbReference>
<dbReference type="EnsemblMetazoa" id="FBtr0082528">
    <molecule id="Q9VGH7-1"/>
    <property type="protein sequence ID" value="FBpp0082002"/>
    <property type="gene ID" value="FBgn0051116"/>
</dbReference>
<dbReference type="EnsemblMetazoa" id="FBtr0113391">
    <molecule id="Q9VGH7-3"/>
    <property type="protein sequence ID" value="FBpp0112303"/>
    <property type="gene ID" value="FBgn0051116"/>
</dbReference>
<dbReference type="EnsemblMetazoa" id="FBtr0300622">
    <molecule id="Q9VGH7-6"/>
    <property type="protein sequence ID" value="FBpp0289849"/>
    <property type="gene ID" value="FBgn0051116"/>
</dbReference>
<dbReference type="EnsemblMetazoa" id="FBtr0301023">
    <molecule id="Q9VGH7-7"/>
    <property type="protein sequence ID" value="FBpp0290245"/>
    <property type="gene ID" value="FBgn0051116"/>
</dbReference>
<dbReference type="GeneID" id="41428"/>
<dbReference type="KEGG" id="dme:Dmel_CG31116"/>
<dbReference type="UCSC" id="CG31116-RA">
    <molecule id="Q9VGH7-1"/>
    <property type="organism name" value="d. melanogaster"/>
</dbReference>
<dbReference type="UCSC" id="CG31116-RE">
    <property type="organism name" value="d. melanogaster"/>
</dbReference>
<dbReference type="UCSC" id="CG31116-RF">
    <property type="organism name" value="d. melanogaster"/>
</dbReference>
<dbReference type="AGR" id="FB:FBgn0051116"/>
<dbReference type="CTD" id="41428"/>
<dbReference type="FlyBase" id="FBgn0051116">
    <property type="gene designation" value="ClC-a"/>
</dbReference>
<dbReference type="VEuPathDB" id="VectorBase:FBgn0051116"/>
<dbReference type="eggNOG" id="KOG0476">
    <property type="taxonomic scope" value="Eukaryota"/>
</dbReference>
<dbReference type="GeneTree" id="ENSGT00940000168847"/>
<dbReference type="InParanoid" id="Q9VGH7"/>
<dbReference type="OMA" id="ACFMFNN"/>
<dbReference type="OrthoDB" id="4564at2759"/>
<dbReference type="PhylomeDB" id="Q9VGH7"/>
<dbReference type="Reactome" id="R-DME-2672351">
    <property type="pathway name" value="Stimuli-sensing channels"/>
</dbReference>
<dbReference type="SignaLink" id="Q9VGH7"/>
<dbReference type="BioGRID-ORCS" id="41428">
    <property type="hits" value="0 hits in 3 CRISPR screens"/>
</dbReference>
<dbReference type="GenomeRNAi" id="41428"/>
<dbReference type="PRO" id="PR:Q9VGH7"/>
<dbReference type="Proteomes" id="UP000000803">
    <property type="component" value="Chromosome 3R"/>
</dbReference>
<dbReference type="Bgee" id="FBgn0051116">
    <property type="expression patterns" value="Expressed in adult Malpighian tubule stellate cell of main segment in Malpighian tubule and 156 other cell types or tissues"/>
</dbReference>
<dbReference type="ExpressionAtlas" id="Q9VGH7">
    <property type="expression patterns" value="baseline and differential"/>
</dbReference>
<dbReference type="GO" id="GO:0015629">
    <property type="term" value="C:actin cytoskeleton"/>
    <property type="evidence" value="ECO:0000250"/>
    <property type="project" value="UniProtKB"/>
</dbReference>
<dbReference type="GO" id="GO:0016324">
    <property type="term" value="C:apical plasma membrane"/>
    <property type="evidence" value="ECO:0000314"/>
    <property type="project" value="FlyBase"/>
</dbReference>
<dbReference type="GO" id="GO:0009925">
    <property type="term" value="C:basal plasma membrane"/>
    <property type="evidence" value="ECO:0000314"/>
    <property type="project" value="FlyBase"/>
</dbReference>
<dbReference type="GO" id="GO:0034707">
    <property type="term" value="C:chloride channel complex"/>
    <property type="evidence" value="ECO:0007669"/>
    <property type="project" value="UniProtKB-KW"/>
</dbReference>
<dbReference type="GO" id="GO:0005886">
    <property type="term" value="C:plasma membrane"/>
    <property type="evidence" value="ECO:0000314"/>
    <property type="project" value="FlyBase"/>
</dbReference>
<dbReference type="GO" id="GO:0005254">
    <property type="term" value="F:chloride channel activity"/>
    <property type="evidence" value="ECO:0000315"/>
    <property type="project" value="FlyBase"/>
</dbReference>
<dbReference type="GO" id="GO:0005247">
    <property type="term" value="F:voltage-gated chloride channel activity"/>
    <property type="evidence" value="ECO:0000318"/>
    <property type="project" value="GO_Central"/>
</dbReference>
<dbReference type="GO" id="GO:1902476">
    <property type="term" value="P:chloride transmembrane transport"/>
    <property type="evidence" value="ECO:0000315"/>
    <property type="project" value="FlyBase"/>
</dbReference>
<dbReference type="GO" id="GO:0006821">
    <property type="term" value="P:chloride transport"/>
    <property type="evidence" value="ECO:0000250"/>
    <property type="project" value="UniProtKB"/>
</dbReference>
<dbReference type="GO" id="GO:0003091">
    <property type="term" value="P:renal water homeostasis"/>
    <property type="evidence" value="ECO:0000315"/>
    <property type="project" value="FlyBase"/>
</dbReference>
<dbReference type="GO" id="GO:0003097">
    <property type="term" value="P:renal water transport"/>
    <property type="evidence" value="ECO:0000315"/>
    <property type="project" value="FlyBase"/>
</dbReference>
<dbReference type="GO" id="GO:0030321">
    <property type="term" value="P:transepithelial chloride transport"/>
    <property type="evidence" value="ECO:0000315"/>
    <property type="project" value="FlyBase"/>
</dbReference>
<dbReference type="GO" id="GO:0035377">
    <property type="term" value="P:transepithelial water transport"/>
    <property type="evidence" value="ECO:0000315"/>
    <property type="project" value="FlyBase"/>
</dbReference>
<dbReference type="CDD" id="cd03683">
    <property type="entry name" value="ClC_1_like"/>
    <property type="match status" value="1"/>
</dbReference>
<dbReference type="FunFam" id="1.10.3080.10:FF:000003">
    <property type="entry name" value="Chloride channel 2"/>
    <property type="match status" value="1"/>
</dbReference>
<dbReference type="FunFam" id="3.10.580.10:FF:000026">
    <property type="entry name" value="Chloride channel protein"/>
    <property type="match status" value="1"/>
</dbReference>
<dbReference type="FunFam" id="3.10.580.10:FF:000032">
    <property type="entry name" value="Chloride channel protein"/>
    <property type="match status" value="1"/>
</dbReference>
<dbReference type="Gene3D" id="3.10.580.10">
    <property type="entry name" value="CBS-domain"/>
    <property type="match status" value="2"/>
</dbReference>
<dbReference type="Gene3D" id="1.10.3080.10">
    <property type="entry name" value="Clc chloride channel"/>
    <property type="match status" value="1"/>
</dbReference>
<dbReference type="InterPro" id="IPR046342">
    <property type="entry name" value="CBS_dom_sf"/>
</dbReference>
<dbReference type="InterPro" id="IPR014743">
    <property type="entry name" value="Cl-channel_core"/>
</dbReference>
<dbReference type="InterPro" id="IPR050970">
    <property type="entry name" value="Cl_channel_volt-gated"/>
</dbReference>
<dbReference type="InterPro" id="IPR001807">
    <property type="entry name" value="ClC"/>
</dbReference>
<dbReference type="PANTHER" id="PTHR45720">
    <property type="entry name" value="CHLORIDE CHANNEL PROTEIN 2"/>
    <property type="match status" value="1"/>
</dbReference>
<dbReference type="PANTHER" id="PTHR45720:SF10">
    <property type="entry name" value="CHLORIDE CHANNEL PROTEIN 2"/>
    <property type="match status" value="1"/>
</dbReference>
<dbReference type="Pfam" id="PF00654">
    <property type="entry name" value="Voltage_CLC"/>
    <property type="match status" value="1"/>
</dbReference>
<dbReference type="PRINTS" id="PR00762">
    <property type="entry name" value="CLCHANNEL"/>
</dbReference>
<dbReference type="SUPFAM" id="SSF54631">
    <property type="entry name" value="CBS-domain pair"/>
    <property type="match status" value="1"/>
</dbReference>
<dbReference type="SUPFAM" id="SSF81340">
    <property type="entry name" value="Clc chloride channel"/>
    <property type="match status" value="1"/>
</dbReference>
<dbReference type="PROSITE" id="PS51371">
    <property type="entry name" value="CBS"/>
    <property type="match status" value="2"/>
</dbReference>
<comment type="function">
    <text evidence="9">Voltage-gated chloride channel. Chloride channels have several functions including the regulation of cell volume; membrane potential stabilization, signal transduction and transepithelial transport.</text>
</comment>
<comment type="subcellular location">
    <subcellularLocation>
        <location evidence="2">Membrane</location>
        <topology evidence="2">Multi-pass membrane protein</topology>
    </subcellularLocation>
</comment>
<comment type="alternative products">
    <event type="alternative splicing"/>
    <isoform>
        <id>Q9VGH7-1</id>
        <name evidence="5">D</name>
        <sequence type="displayed"/>
    </isoform>
    <isoform>
        <id>Q9VGH7-2</id>
        <name evidence="5">A</name>
        <sequence type="described" ref="VSP_052366"/>
    </isoform>
    <isoform>
        <id>Q9VGH7-3</id>
        <name>F</name>
        <name>B</name>
        <sequence type="described" ref="VSP_052367"/>
    </isoform>
    <isoform>
        <id>Q9VGH7-4</id>
        <name evidence="5">C</name>
        <sequence type="described" ref="VSP_052366 VSP_052367"/>
    </isoform>
    <isoform>
        <id>Q9VGH7-6</id>
        <name>G</name>
        <sequence type="described" ref="VSP_035041 VSP_035042 VSP_052367"/>
    </isoform>
    <isoform>
        <id>Q9VGH7-7</id>
        <name>H</name>
        <sequence type="described" ref="VSP_035041 VSP_035042"/>
    </isoform>
</comment>
<comment type="tissue specificity">
    <text evidence="7 9">At embryonic stages 13-16, expressed in a subset of the midline cells of the midline primordium and in all of the midline glia. Expressed along the Z-line of the sarcomere in larval longitudinal muscles.</text>
</comment>
<comment type="RNA editing">
    <location>
        <position position="249" evidence="6 8"/>
    </location>
    <location>
        <position position="276" evidence="6 8"/>
    </location>
    <location>
        <position position="285" evidence="6 8"/>
    </location>
    <location>
        <position position="286" evidence="6 8"/>
    </location>
    <text evidence="8">Partially edited. Target of Adar.</text>
</comment>
<comment type="miscellaneous">
    <text>The CLC channel family contains both chloride channels and proton-coupled anion transporters that exchange chloride or another anion for protons. The absence of conserved gating glutamate residues is typical for family members that function as channels.</text>
</comment>
<comment type="similarity">
    <text evidence="13">Belongs to the chloride channel (TC 2.A.49) family.</text>
</comment>
<organism>
    <name type="scientific">Drosophila melanogaster</name>
    <name type="common">Fruit fly</name>
    <dbReference type="NCBI Taxonomy" id="7227"/>
    <lineage>
        <taxon>Eukaryota</taxon>
        <taxon>Metazoa</taxon>
        <taxon>Ecdysozoa</taxon>
        <taxon>Arthropoda</taxon>
        <taxon>Hexapoda</taxon>
        <taxon>Insecta</taxon>
        <taxon>Pterygota</taxon>
        <taxon>Neoptera</taxon>
        <taxon>Endopterygota</taxon>
        <taxon>Diptera</taxon>
        <taxon>Brachycera</taxon>
        <taxon>Muscomorpha</taxon>
        <taxon>Ephydroidea</taxon>
        <taxon>Drosophilidae</taxon>
        <taxon>Drosophila</taxon>
        <taxon>Sophophora</taxon>
    </lineage>
</organism>
<reference evidence="14" key="1">
    <citation type="journal article" date="2000" name="Science">
        <title>The genome sequence of Drosophila melanogaster.</title>
        <authorList>
            <person name="Adams M.D."/>
            <person name="Celniker S.E."/>
            <person name="Holt R.A."/>
            <person name="Evans C.A."/>
            <person name="Gocayne J.D."/>
            <person name="Amanatides P.G."/>
            <person name="Scherer S.E."/>
            <person name="Li P.W."/>
            <person name="Hoskins R.A."/>
            <person name="Galle R.F."/>
            <person name="George R.A."/>
            <person name="Lewis S.E."/>
            <person name="Richards S."/>
            <person name="Ashburner M."/>
            <person name="Henderson S.N."/>
            <person name="Sutton G.G."/>
            <person name="Wortman J.R."/>
            <person name="Yandell M.D."/>
            <person name="Zhang Q."/>
            <person name="Chen L.X."/>
            <person name="Brandon R.C."/>
            <person name="Rogers Y.-H.C."/>
            <person name="Blazej R.G."/>
            <person name="Champe M."/>
            <person name="Pfeiffer B.D."/>
            <person name="Wan K.H."/>
            <person name="Doyle C."/>
            <person name="Baxter E.G."/>
            <person name="Helt G."/>
            <person name="Nelson C.R."/>
            <person name="Miklos G.L.G."/>
            <person name="Abril J.F."/>
            <person name="Agbayani A."/>
            <person name="An H.-J."/>
            <person name="Andrews-Pfannkoch C."/>
            <person name="Baldwin D."/>
            <person name="Ballew R.M."/>
            <person name="Basu A."/>
            <person name="Baxendale J."/>
            <person name="Bayraktaroglu L."/>
            <person name="Beasley E.M."/>
            <person name="Beeson K.Y."/>
            <person name="Benos P.V."/>
            <person name="Berman B.P."/>
            <person name="Bhandari D."/>
            <person name="Bolshakov S."/>
            <person name="Borkova D."/>
            <person name="Botchan M.R."/>
            <person name="Bouck J."/>
            <person name="Brokstein P."/>
            <person name="Brottier P."/>
            <person name="Burtis K.C."/>
            <person name="Busam D.A."/>
            <person name="Butler H."/>
            <person name="Cadieu E."/>
            <person name="Center A."/>
            <person name="Chandra I."/>
            <person name="Cherry J.M."/>
            <person name="Cawley S."/>
            <person name="Dahlke C."/>
            <person name="Davenport L.B."/>
            <person name="Davies P."/>
            <person name="de Pablos B."/>
            <person name="Delcher A."/>
            <person name="Deng Z."/>
            <person name="Mays A.D."/>
            <person name="Dew I."/>
            <person name="Dietz S.M."/>
            <person name="Dodson K."/>
            <person name="Doup L.E."/>
            <person name="Downes M."/>
            <person name="Dugan-Rocha S."/>
            <person name="Dunkov B.C."/>
            <person name="Dunn P."/>
            <person name="Durbin K.J."/>
            <person name="Evangelista C.C."/>
            <person name="Ferraz C."/>
            <person name="Ferriera S."/>
            <person name="Fleischmann W."/>
            <person name="Fosler C."/>
            <person name="Gabrielian A.E."/>
            <person name="Garg N.S."/>
            <person name="Gelbart W.M."/>
            <person name="Glasser K."/>
            <person name="Glodek A."/>
            <person name="Gong F."/>
            <person name="Gorrell J.H."/>
            <person name="Gu Z."/>
            <person name="Guan P."/>
            <person name="Harris M."/>
            <person name="Harris N.L."/>
            <person name="Harvey D.A."/>
            <person name="Heiman T.J."/>
            <person name="Hernandez J.R."/>
            <person name="Houck J."/>
            <person name="Hostin D."/>
            <person name="Houston K.A."/>
            <person name="Howland T.J."/>
            <person name="Wei M.-H."/>
            <person name="Ibegwam C."/>
            <person name="Jalali M."/>
            <person name="Kalush F."/>
            <person name="Karpen G.H."/>
            <person name="Ke Z."/>
            <person name="Kennison J.A."/>
            <person name="Ketchum K.A."/>
            <person name="Kimmel B.E."/>
            <person name="Kodira C.D."/>
            <person name="Kraft C.L."/>
            <person name="Kravitz S."/>
            <person name="Kulp D."/>
            <person name="Lai Z."/>
            <person name="Lasko P."/>
            <person name="Lei Y."/>
            <person name="Levitsky A.A."/>
            <person name="Li J.H."/>
            <person name="Li Z."/>
            <person name="Liang Y."/>
            <person name="Lin X."/>
            <person name="Liu X."/>
            <person name="Mattei B."/>
            <person name="McIntosh T.C."/>
            <person name="McLeod M.P."/>
            <person name="McPherson D."/>
            <person name="Merkulov G."/>
            <person name="Milshina N.V."/>
            <person name="Mobarry C."/>
            <person name="Morris J."/>
            <person name="Moshrefi A."/>
            <person name="Mount S.M."/>
            <person name="Moy M."/>
            <person name="Murphy B."/>
            <person name="Murphy L."/>
            <person name="Muzny D.M."/>
            <person name="Nelson D.L."/>
            <person name="Nelson D.R."/>
            <person name="Nelson K.A."/>
            <person name="Nixon K."/>
            <person name="Nusskern D.R."/>
            <person name="Pacleb J.M."/>
            <person name="Palazzolo M."/>
            <person name="Pittman G.S."/>
            <person name="Pan S."/>
            <person name="Pollard J."/>
            <person name="Puri V."/>
            <person name="Reese M.G."/>
            <person name="Reinert K."/>
            <person name="Remington K."/>
            <person name="Saunders R.D.C."/>
            <person name="Scheeler F."/>
            <person name="Shen H."/>
            <person name="Shue B.C."/>
            <person name="Siden-Kiamos I."/>
            <person name="Simpson M."/>
            <person name="Skupski M.P."/>
            <person name="Smith T.J."/>
            <person name="Spier E."/>
            <person name="Spradling A.C."/>
            <person name="Stapleton M."/>
            <person name="Strong R."/>
            <person name="Sun E."/>
            <person name="Svirskas R."/>
            <person name="Tector C."/>
            <person name="Turner R."/>
            <person name="Venter E."/>
            <person name="Wang A.H."/>
            <person name="Wang X."/>
            <person name="Wang Z.-Y."/>
            <person name="Wassarman D.A."/>
            <person name="Weinstock G.M."/>
            <person name="Weissenbach J."/>
            <person name="Williams S.M."/>
            <person name="Woodage T."/>
            <person name="Worley K.C."/>
            <person name="Wu D."/>
            <person name="Yang S."/>
            <person name="Yao Q.A."/>
            <person name="Ye J."/>
            <person name="Yeh R.-F."/>
            <person name="Zaveri J.S."/>
            <person name="Zhan M."/>
            <person name="Zhang G."/>
            <person name="Zhao Q."/>
            <person name="Zheng L."/>
            <person name="Zheng X.H."/>
            <person name="Zhong F.N."/>
            <person name="Zhong W."/>
            <person name="Zhou X."/>
            <person name="Zhu S.C."/>
            <person name="Zhu X."/>
            <person name="Smith H.O."/>
            <person name="Gibbs R.A."/>
            <person name="Myers E.W."/>
            <person name="Rubin G.M."/>
            <person name="Venter J.C."/>
        </authorList>
    </citation>
    <scope>NUCLEOTIDE SEQUENCE [LARGE SCALE GENOMIC DNA]</scope>
    <source>
        <strain evidence="5">Berkeley</strain>
    </source>
</reference>
<reference evidence="13 14" key="2">
    <citation type="journal article" date="2002" name="Genome Biol.">
        <title>Annotation of the Drosophila melanogaster euchromatic genome: a systematic review.</title>
        <authorList>
            <person name="Misra S."/>
            <person name="Crosby M.A."/>
            <person name="Mungall C.J."/>
            <person name="Matthews B.B."/>
            <person name="Campbell K.S."/>
            <person name="Hradecky P."/>
            <person name="Huang Y."/>
            <person name="Kaminker J.S."/>
            <person name="Millburn G.H."/>
            <person name="Prochnik S.E."/>
            <person name="Smith C.D."/>
            <person name="Tupy J.L."/>
            <person name="Whitfield E.J."/>
            <person name="Bayraktaroglu L."/>
            <person name="Berman B.P."/>
            <person name="Bettencourt B.R."/>
            <person name="Celniker S.E."/>
            <person name="de Grey A.D.N.J."/>
            <person name="Drysdale R.A."/>
            <person name="Harris N.L."/>
            <person name="Richter J."/>
            <person name="Russo S."/>
            <person name="Schroeder A.J."/>
            <person name="Shu S.Q."/>
            <person name="Stapleton M."/>
            <person name="Yamada C."/>
            <person name="Ashburner M."/>
            <person name="Gelbart W.M."/>
            <person name="Rubin G.M."/>
            <person name="Lewis S.E."/>
        </authorList>
    </citation>
    <scope>GENOME REANNOTATION</scope>
    <scope>ALTERNATIVE SPLICING</scope>
    <source>
        <strain>Berkeley</strain>
    </source>
</reference>
<reference evidence="13 15" key="3">
    <citation type="journal article" date="2002" name="Genome Biol.">
        <title>A Drosophila full-length cDNA resource.</title>
        <authorList>
            <person name="Stapleton M."/>
            <person name="Carlson J.W."/>
            <person name="Brokstein P."/>
            <person name="Yu C."/>
            <person name="Champe M."/>
            <person name="George R.A."/>
            <person name="Guarin H."/>
            <person name="Kronmiller B."/>
            <person name="Pacleb J.M."/>
            <person name="Park S."/>
            <person name="Wan K.H."/>
            <person name="Rubin G.M."/>
            <person name="Celniker S.E."/>
        </authorList>
    </citation>
    <scope>NUCLEOTIDE SEQUENCE [LARGE SCALE MRNA] (ISOFORM A)</scope>
    <scope>RNA EDITING OF POSITIONS 249; 276; 285 AND 286</scope>
    <source>
        <strain evidence="15">Berkeley</strain>
        <tissue evidence="6">Head</tissue>
    </source>
</reference>
<reference evidence="13 16" key="4">
    <citation type="submission" date="2007-04" db="EMBL/GenBank/DDBJ databases">
        <authorList>
            <person name="Stapleton M."/>
            <person name="Brokstein P."/>
            <person name="Hong L."/>
            <person name="Agbayani A."/>
            <person name="Carlson J.W."/>
            <person name="Champe M."/>
            <person name="Chavez C."/>
            <person name="Dorsett V."/>
            <person name="Dresnek D."/>
            <person name="Farfan D."/>
            <person name="Frise E."/>
            <person name="George R.A."/>
            <person name="Gonzalez M."/>
            <person name="Guarin H."/>
            <person name="Kapadia B."/>
            <person name="Kronmiller B."/>
            <person name="Li P.W."/>
            <person name="Liao G."/>
            <person name="Miranda A."/>
            <person name="Mungall C.J."/>
            <person name="Nunoo J."/>
            <person name="Pacleb J.M."/>
            <person name="Paragas V."/>
            <person name="Park S."/>
            <person name="Patel S."/>
            <person name="Phouanenavong S."/>
            <person name="Wan K.H."/>
            <person name="Yu C."/>
            <person name="Lewis S.E."/>
            <person name="Rubin G.M."/>
            <person name="Celniker S.E."/>
        </authorList>
    </citation>
    <scope>NUCLEOTIDE SEQUENCE [LARGE SCALE MRNA] (ISOFORMS F AND G)</scope>
    <source>
        <strain evidence="16">Berkeley</strain>
        <tissue>Embryo</tissue>
    </source>
</reference>
<reference evidence="13" key="5">
    <citation type="journal article" date="2004" name="Dev. Biol.">
        <title>Gene expression profiling of the developing Drosophila CNS midline cells.</title>
        <authorList>
            <person name="Kearney J.B."/>
            <person name="Wheeler S.R."/>
            <person name="Estes P."/>
            <person name="Parente B."/>
            <person name="Crews S.T."/>
        </authorList>
    </citation>
    <scope>IDENTIFICATION</scope>
    <scope>TISSUE SPECIFICITY</scope>
</reference>
<reference evidence="13" key="6">
    <citation type="journal article" date="2006" name="RNA">
        <title>RNA editing in Drosophila melanogaster: new targets and functional consequences.</title>
        <authorList>
            <person name="Stapleton M."/>
            <person name="Carlson J.W."/>
            <person name="Celniker S.E."/>
        </authorList>
    </citation>
    <scope>RNA EDITING OF POSITIONS 249; 276; 285 AND 286</scope>
</reference>
<reference key="7">
    <citation type="journal article" date="2007" name="J. Exp. Biol.">
        <title>Properties and possible function of a hyperpolarisation-activated chloride current in Drosophila.</title>
        <authorList>
            <person name="Rose U."/>
            <person name="Derst C."/>
            <person name="Wanischeck M."/>
            <person name="Marinc C."/>
            <person name="Walther C."/>
        </authorList>
    </citation>
    <scope>FUNCTION</scope>
    <scope>TISSUE SPECIFICITY</scope>
</reference>
<keyword id="KW-0025">Alternative splicing</keyword>
<keyword id="KW-0129">CBS domain</keyword>
<keyword id="KW-0868">Chloride</keyword>
<keyword id="KW-0869">Chloride channel</keyword>
<keyword id="KW-0407">Ion channel</keyword>
<keyword id="KW-0406">Ion transport</keyword>
<keyword id="KW-0472">Membrane</keyword>
<keyword id="KW-1185">Reference proteome</keyword>
<keyword id="KW-0677">Repeat</keyword>
<keyword id="KW-0691">RNA editing</keyword>
<keyword id="KW-0812">Transmembrane</keyword>
<keyword id="KW-1133">Transmembrane helix</keyword>
<keyword id="KW-0813">Transport</keyword>
<keyword id="KW-0851">Voltage-gated channel</keyword>
<accession>Q9VGH7</accession>
<accession>A4VCL3</accession>
<accession>A8JQX8</accession>
<accession>A8JQX9</accession>
<accession>E1JIJ0</accession>
<accession>Q7YU63</accession>
<accession>Q8INJ7</accession>
<accession>Q8MRL4</accession>
<accession>Q9VGH8</accession>
<sequence length="1193" mass="133648">MVYFGDRQRDRNRDRSNQKVERIIHDEEFGEENVELVDSEWADFEKFICQLRKRRNSAMSMEEELRHVQRHPKIKSHAFYPCPPPAENARDSDSSDDDDPIGYIDTLMYGRYTKDLGEFAKDEARKLKILEKRRKQEDKQRNKELLGKHSTRAKRVSSWIWRHTVARLGEDWVFLALLGIIMALLSFIMDKGISICTNARIWLYRDLTSQPFVQYIAWVSLPVCLILFSAGFVHLIAPQSIGSGIPEMKTILRGVQLKEYLTFKTLVAKVIGLTATLGSGMPLGKEGPFVHIASIVAQLLSKLVTSFQGIYENESRNSEMLAAACAVGVGACFAAPVGGVLFSIEVTTTYFAVRNYWRGFFAAVCGATVFRLLAVWFQNADTVRALFLTNFTTEFPFDPQELFVFALIGLVCGLGGASYVWVHRRYVLFMRSNKRMNKFLQKNRFLYPGFLALLVSSISFPLGTGQFLAGELSTHEQVTQLFSNFTWSRDDLTVEQAAVVTHWMTSYTSVFGNLVIYTLFTFVVSIIASTIPVPSGMFIPVFKIGAGFGRLVGEFMAVTFPHGVRYGGRLSPIMPGGYAVVGAAAFSGSVTHTVSVAVIIFEMTGQITHVVPVMIAVLVANAVAALLQPSIYDSIILIKKLPYLPDLLPSSSGMYSIFVEDFMVRDVKYIWHGISYQKLKEVLKLNKTLRSLPLVDSPDNMILLGSVQRYELIKMIEKHIGREKRMEVAQKWQKEAQERALEEEKKKQEVELKMRRPSRFEVLPAPDILSLRQIANDEMLPPKKRAETMHGSLAPRKSILKKTNSFNLKTYAQPMGHSPSITPYTTITGNSEFRIRSAFEAIFKKSTTLQDVQPDPETGSLSPAASNHEVEVPRTPSTPGVSKKVQLPAQSNWDFVTDQIMLQVNPISTESNKMPAEKDFTDKALSNNGDSSKQSPSIKFKANKVADVNRSPQTAKRCSKIRFANEVGVNGSPTRTKCKIKPENVLGYSIEDVDETTNPESLAESIQKPKSVRLPRERVIDMSPEDQKQWELEEMLKPIDLQKANVHIDPSPFQLVERTSILKVHSLFSMVGINHAYVTKIGRLVGVVGLKELRKAIEDINSNSFVPPTRDEDADEKPAVEKPLLSTNSSDKAVDMTVTSMDSALSNSENCSDIEMEHIKHTDKGTVSLTMPPQESKQSPSADKSNTENGNHA</sequence>
<name>CLCN2_DROME</name>
<protein>
    <recommendedName>
        <fullName>Chloride channel protein 2</fullName>
        <shortName>ClC-2</shortName>
        <shortName>DmClC-2</shortName>
    </recommendedName>
    <alternativeName>
        <fullName>Chloride channel-a</fullName>
    </alternativeName>
</protein>
<proteinExistence type="evidence at transcript level"/>
<gene>
    <name type="primary">ClC-a</name>
    <name type="ORF">CG31116</name>
</gene>